<keyword id="KW-0998">Cell outer membrane</keyword>
<keyword id="KW-0472">Membrane</keyword>
<keyword id="KW-0677">Repeat</keyword>
<keyword id="KW-0732">Signal</keyword>
<keyword id="KW-0812">Transmembrane</keyword>
<keyword id="KW-1134">Transmembrane beta strand</keyword>
<feature type="signal peptide" evidence="1">
    <location>
        <begin position="1"/>
        <end position="20"/>
    </location>
</feature>
<feature type="chain" id="PRO_1000145771" description="Outer membrane protein assembly factor BamA">
    <location>
        <begin position="21"/>
        <end position="810"/>
    </location>
</feature>
<feature type="domain" description="POTRA 1" evidence="2">
    <location>
        <begin position="24"/>
        <end position="91"/>
    </location>
</feature>
<feature type="domain" description="POTRA 2" evidence="2">
    <location>
        <begin position="92"/>
        <end position="172"/>
    </location>
</feature>
<feature type="domain" description="POTRA 3" evidence="2">
    <location>
        <begin position="175"/>
        <end position="263"/>
    </location>
</feature>
<feature type="domain" description="POTRA 4" evidence="2">
    <location>
        <begin position="266"/>
        <end position="344"/>
    </location>
</feature>
<feature type="domain" description="POTRA 5" evidence="2">
    <location>
        <begin position="347"/>
        <end position="421"/>
    </location>
</feature>
<proteinExistence type="inferred from homology"/>
<sequence>MAMKKLLIASLLFSSATVYGAEGFVVKDIHFEGLQRVAVGAALLSMPVRTGDTVNDEDISNTIRALFATGNFEDVRVLRDGDTLLVQVKERPTIASITFSGNKSVKDDMLKQNLEASGVRVGESLDRTTIADIEKGLEDFYYSVGKYSASVKAVVTPLPRNRVDLKLVFQEGVSAEIQQINIVGNHAFTTDELISHFQLRDEVPWWNVVGDRKYQKQKLAGDLETLRSYYLDRGYARFNIDSTQVSLTPDKKGIYVTVNITEGDQYKLSGVEVSGNLAGHSAEIEQLTKIEPGELYNGTKVTKMEDDIKKLLGRYGYAYPRVQSMPEINDADKTVKLRVNVDAGNRFYVRKIRFEGNDTSKDAVLRREMRQMEGAWLGSDLVDQGKERLNRLGFFETVDTDTQRVPGSPDQVDVVYKVKERNTGSFNFGIGYGTESGVSFQAGVQQDNWLGTGYAVGINGTKNDYQTYAELSVTNPYFTVDGVSLGGRLFYNDFQADDADLSDYTNKSYGTDVTLGFPINEYNSLRAGLGYVHNSLSNMQPQVAMWRYLYSMGEHPSTSDQDNSFKTDDFTFNYGWTYNKLDRGYFPTDGSRVNLTGKVTIPGSDNEYYKVTLDTATYVPIDDDHKWVVLGRTRWGYGDGLGGKEMPFYENFYAGGSSTVRGFQSNTIGPKAVYFPHQASNYDPDYDYECATQDGAKDLCKSDDAVGGNAMAVASLEFITPTPFISDKYANSVRTSFFWDMGTVWDTNWDSSQYSGYPDYSDPSNIRMSAGIALQWMSPLGPLVFSYAQPFKKYDGDKAEQFQFNIGKTW</sequence>
<comment type="function">
    <text evidence="1">Part of the outer membrane protein assembly complex, which is involved in assembly and insertion of beta-barrel proteins into the outer membrane. Constitutes, with BamD, the core component of the assembly machinery.</text>
</comment>
<comment type="subunit">
    <text evidence="1">Part of the Bam complex, which is composed of the outer membrane protein BamA, and four lipoproteins BamB, BamC, BamD and BamE.</text>
</comment>
<comment type="subcellular location">
    <subcellularLocation>
        <location evidence="1">Cell outer membrane</location>
    </subcellularLocation>
</comment>
<comment type="similarity">
    <text evidence="1">Belongs to the BamA family.</text>
</comment>
<gene>
    <name evidence="1" type="primary">bamA</name>
    <name type="synonym">yaeT</name>
    <name type="ordered locus">ECH74115_0187</name>
</gene>
<protein>
    <recommendedName>
        <fullName evidence="1">Outer membrane protein assembly factor BamA</fullName>
    </recommendedName>
</protein>
<name>BAMA_ECO5E</name>
<accession>B5Z0F6</accession>
<organism>
    <name type="scientific">Escherichia coli O157:H7 (strain EC4115 / EHEC)</name>
    <dbReference type="NCBI Taxonomy" id="444450"/>
    <lineage>
        <taxon>Bacteria</taxon>
        <taxon>Pseudomonadati</taxon>
        <taxon>Pseudomonadota</taxon>
        <taxon>Gammaproteobacteria</taxon>
        <taxon>Enterobacterales</taxon>
        <taxon>Enterobacteriaceae</taxon>
        <taxon>Escherichia</taxon>
    </lineage>
</organism>
<dbReference type="EMBL" id="CP001164">
    <property type="protein sequence ID" value="ACI39700.1"/>
    <property type="molecule type" value="Genomic_DNA"/>
</dbReference>
<dbReference type="RefSeq" id="WP_001240896.1">
    <property type="nucleotide sequence ID" value="NC_011353.1"/>
</dbReference>
<dbReference type="SMR" id="B5Z0F6"/>
<dbReference type="GeneID" id="93777248"/>
<dbReference type="KEGG" id="ecf:ECH74115_0187"/>
<dbReference type="HOGENOM" id="CLU_007664_1_0_6"/>
<dbReference type="GO" id="GO:1990063">
    <property type="term" value="C:Bam protein complex"/>
    <property type="evidence" value="ECO:0007669"/>
    <property type="project" value="TreeGrafter"/>
</dbReference>
<dbReference type="GO" id="GO:0043165">
    <property type="term" value="P:Gram-negative-bacterium-type cell outer membrane assembly"/>
    <property type="evidence" value="ECO:0007669"/>
    <property type="project" value="UniProtKB-UniRule"/>
</dbReference>
<dbReference type="GO" id="GO:0051205">
    <property type="term" value="P:protein insertion into membrane"/>
    <property type="evidence" value="ECO:0007669"/>
    <property type="project" value="UniProtKB-UniRule"/>
</dbReference>
<dbReference type="FunFam" id="2.40.160.50:FF:000001">
    <property type="entry name" value="Outer membrane protein assembly factor BamA"/>
    <property type="match status" value="1"/>
</dbReference>
<dbReference type="FunFam" id="3.10.20.310:FF:000001">
    <property type="entry name" value="Outer membrane protein assembly factor BamA"/>
    <property type="match status" value="1"/>
</dbReference>
<dbReference type="FunFam" id="3.10.20.310:FF:000002">
    <property type="entry name" value="Outer membrane protein assembly factor BamA"/>
    <property type="match status" value="1"/>
</dbReference>
<dbReference type="FunFam" id="3.10.20.310:FF:000003">
    <property type="entry name" value="Outer membrane protein assembly factor BamA"/>
    <property type="match status" value="1"/>
</dbReference>
<dbReference type="FunFam" id="3.10.20.310:FF:000004">
    <property type="entry name" value="Outer membrane protein assembly factor BamA"/>
    <property type="match status" value="1"/>
</dbReference>
<dbReference type="FunFam" id="3.10.20.310:FF:000005">
    <property type="entry name" value="Outer membrane protein assembly factor BamA"/>
    <property type="match status" value="1"/>
</dbReference>
<dbReference type="Gene3D" id="3.10.20.310">
    <property type="entry name" value="membrane protein fhac"/>
    <property type="match status" value="5"/>
</dbReference>
<dbReference type="Gene3D" id="2.40.160.50">
    <property type="entry name" value="membrane protein fhac: a member of the omp85/tpsb transporter family"/>
    <property type="match status" value="1"/>
</dbReference>
<dbReference type="HAMAP" id="MF_01430">
    <property type="entry name" value="OM_assembly_BamA"/>
    <property type="match status" value="1"/>
</dbReference>
<dbReference type="InterPro" id="IPR000184">
    <property type="entry name" value="Bac_surfAg_D15"/>
</dbReference>
<dbReference type="InterPro" id="IPR010827">
    <property type="entry name" value="BamA/TamA_POTRA"/>
</dbReference>
<dbReference type="InterPro" id="IPR039910">
    <property type="entry name" value="D15-like"/>
</dbReference>
<dbReference type="InterPro" id="IPR023707">
    <property type="entry name" value="OM_assembly_BamA"/>
</dbReference>
<dbReference type="InterPro" id="IPR034746">
    <property type="entry name" value="POTRA"/>
</dbReference>
<dbReference type="NCBIfam" id="TIGR03303">
    <property type="entry name" value="OM_YaeT"/>
    <property type="match status" value="1"/>
</dbReference>
<dbReference type="NCBIfam" id="NF008287">
    <property type="entry name" value="PRK11067.1"/>
    <property type="match status" value="1"/>
</dbReference>
<dbReference type="PANTHER" id="PTHR12815:SF23">
    <property type="entry name" value="OUTER MEMBRANE PROTEIN ASSEMBLY FACTOR BAMA"/>
    <property type="match status" value="1"/>
</dbReference>
<dbReference type="PANTHER" id="PTHR12815">
    <property type="entry name" value="SORTING AND ASSEMBLY MACHINERY SAMM50 PROTEIN FAMILY MEMBER"/>
    <property type="match status" value="1"/>
</dbReference>
<dbReference type="Pfam" id="PF01103">
    <property type="entry name" value="Omp85"/>
    <property type="match status" value="1"/>
</dbReference>
<dbReference type="Pfam" id="PF07244">
    <property type="entry name" value="POTRA"/>
    <property type="match status" value="4"/>
</dbReference>
<dbReference type="PIRSF" id="PIRSF006076">
    <property type="entry name" value="OM_assembly_OMP85"/>
    <property type="match status" value="1"/>
</dbReference>
<dbReference type="PROSITE" id="PS51779">
    <property type="entry name" value="POTRA"/>
    <property type="match status" value="5"/>
</dbReference>
<evidence type="ECO:0000255" key="1">
    <source>
        <dbReference type="HAMAP-Rule" id="MF_01430"/>
    </source>
</evidence>
<evidence type="ECO:0000255" key="2">
    <source>
        <dbReference type="PROSITE-ProRule" id="PRU01115"/>
    </source>
</evidence>
<reference key="1">
    <citation type="journal article" date="2011" name="Proc. Natl. Acad. Sci. U.S.A.">
        <title>Genomic anatomy of Escherichia coli O157:H7 outbreaks.</title>
        <authorList>
            <person name="Eppinger M."/>
            <person name="Mammel M.K."/>
            <person name="Leclerc J.E."/>
            <person name="Ravel J."/>
            <person name="Cebula T.A."/>
        </authorList>
    </citation>
    <scope>NUCLEOTIDE SEQUENCE [LARGE SCALE GENOMIC DNA]</scope>
    <source>
        <strain>EC4115 / EHEC</strain>
    </source>
</reference>